<reference key="1">
    <citation type="journal article" date="1989" name="J. Biol. Chem.">
        <title>Cloning and characterization of human pancreatic lipase cDNA.</title>
        <authorList>
            <person name="Lowe M.E."/>
            <person name="Rosenblum J.L."/>
            <person name="Strauss A.W."/>
        </authorList>
    </citation>
    <scope>NUCLEOTIDE SEQUENCE [MRNA]</scope>
</reference>
<reference key="2">
    <citation type="journal article" date="1992" name="J. Biol. Chem.">
        <title>Two novel human pancreatic lipase related proteins, hPLRP1 and hPLRP2. Differences in colipase dependence and in lipase activity.</title>
        <authorList>
            <person name="Giller T."/>
            <person name="Buchwald P."/>
            <person name="Blum-Kaelin D."/>
            <person name="Hunziker W."/>
        </authorList>
    </citation>
    <scope>NUCLEOTIDE SEQUENCE [MRNA]</scope>
    <source>
        <tissue>Pancreas</tissue>
    </source>
</reference>
<reference key="3">
    <citation type="journal article" date="1993" name="Gene">
        <title>The human pancreatic lipase-encoding gene: structure and conservation of an Alu sequence in the lipase gene family.</title>
        <authorList>
            <person name="Sims H.F."/>
            <person name="Jennens M.L."/>
            <person name="Lowe M.E."/>
        </authorList>
    </citation>
    <scope>NUCLEOTIDE SEQUENCE [GENOMIC DNA]</scope>
</reference>
<reference key="4">
    <citation type="journal article" date="2004" name="Nat. Genet.">
        <title>Complete sequencing and characterization of 21,243 full-length human cDNAs.</title>
        <authorList>
            <person name="Ota T."/>
            <person name="Suzuki Y."/>
            <person name="Nishikawa T."/>
            <person name="Otsuki T."/>
            <person name="Sugiyama T."/>
            <person name="Irie R."/>
            <person name="Wakamatsu A."/>
            <person name="Hayashi K."/>
            <person name="Sato H."/>
            <person name="Nagai K."/>
            <person name="Kimura K."/>
            <person name="Makita H."/>
            <person name="Sekine M."/>
            <person name="Obayashi M."/>
            <person name="Nishi T."/>
            <person name="Shibahara T."/>
            <person name="Tanaka T."/>
            <person name="Ishii S."/>
            <person name="Yamamoto J."/>
            <person name="Saito K."/>
            <person name="Kawai Y."/>
            <person name="Isono Y."/>
            <person name="Nakamura Y."/>
            <person name="Nagahari K."/>
            <person name="Murakami K."/>
            <person name="Yasuda T."/>
            <person name="Iwayanagi T."/>
            <person name="Wagatsuma M."/>
            <person name="Shiratori A."/>
            <person name="Sudo H."/>
            <person name="Hosoiri T."/>
            <person name="Kaku Y."/>
            <person name="Kodaira H."/>
            <person name="Kondo H."/>
            <person name="Sugawara M."/>
            <person name="Takahashi M."/>
            <person name="Kanda K."/>
            <person name="Yokoi T."/>
            <person name="Furuya T."/>
            <person name="Kikkawa E."/>
            <person name="Omura Y."/>
            <person name="Abe K."/>
            <person name="Kamihara K."/>
            <person name="Katsuta N."/>
            <person name="Sato K."/>
            <person name="Tanikawa M."/>
            <person name="Yamazaki M."/>
            <person name="Ninomiya K."/>
            <person name="Ishibashi T."/>
            <person name="Yamashita H."/>
            <person name="Murakawa K."/>
            <person name="Fujimori K."/>
            <person name="Tanai H."/>
            <person name="Kimata M."/>
            <person name="Watanabe M."/>
            <person name="Hiraoka S."/>
            <person name="Chiba Y."/>
            <person name="Ishida S."/>
            <person name="Ono Y."/>
            <person name="Takiguchi S."/>
            <person name="Watanabe S."/>
            <person name="Yosida M."/>
            <person name="Hotuta T."/>
            <person name="Kusano J."/>
            <person name="Kanehori K."/>
            <person name="Takahashi-Fujii A."/>
            <person name="Hara H."/>
            <person name="Tanase T.-O."/>
            <person name="Nomura Y."/>
            <person name="Togiya S."/>
            <person name="Komai F."/>
            <person name="Hara R."/>
            <person name="Takeuchi K."/>
            <person name="Arita M."/>
            <person name="Imose N."/>
            <person name="Musashino K."/>
            <person name="Yuuki H."/>
            <person name="Oshima A."/>
            <person name="Sasaki N."/>
            <person name="Aotsuka S."/>
            <person name="Yoshikawa Y."/>
            <person name="Matsunawa H."/>
            <person name="Ichihara T."/>
            <person name="Shiohata N."/>
            <person name="Sano S."/>
            <person name="Moriya S."/>
            <person name="Momiyama H."/>
            <person name="Satoh N."/>
            <person name="Takami S."/>
            <person name="Terashima Y."/>
            <person name="Suzuki O."/>
            <person name="Nakagawa S."/>
            <person name="Senoh A."/>
            <person name="Mizoguchi H."/>
            <person name="Goto Y."/>
            <person name="Shimizu F."/>
            <person name="Wakebe H."/>
            <person name="Hishigaki H."/>
            <person name="Watanabe T."/>
            <person name="Sugiyama A."/>
            <person name="Takemoto M."/>
            <person name="Kawakami B."/>
            <person name="Yamazaki M."/>
            <person name="Watanabe K."/>
            <person name="Kumagai A."/>
            <person name="Itakura S."/>
            <person name="Fukuzumi Y."/>
            <person name="Fujimori Y."/>
            <person name="Komiyama M."/>
            <person name="Tashiro H."/>
            <person name="Tanigami A."/>
            <person name="Fujiwara T."/>
            <person name="Ono T."/>
            <person name="Yamada K."/>
            <person name="Fujii Y."/>
            <person name="Ozaki K."/>
            <person name="Hirao M."/>
            <person name="Ohmori Y."/>
            <person name="Kawabata A."/>
            <person name="Hikiji T."/>
            <person name="Kobatake N."/>
            <person name="Inagaki H."/>
            <person name="Ikema Y."/>
            <person name="Okamoto S."/>
            <person name="Okitani R."/>
            <person name="Kawakami T."/>
            <person name="Noguchi S."/>
            <person name="Itoh T."/>
            <person name="Shigeta K."/>
            <person name="Senba T."/>
            <person name="Matsumura K."/>
            <person name="Nakajima Y."/>
            <person name="Mizuno T."/>
            <person name="Morinaga M."/>
            <person name="Sasaki M."/>
            <person name="Togashi T."/>
            <person name="Oyama M."/>
            <person name="Hata H."/>
            <person name="Watanabe M."/>
            <person name="Komatsu T."/>
            <person name="Mizushima-Sugano J."/>
            <person name="Satoh T."/>
            <person name="Shirai Y."/>
            <person name="Takahashi Y."/>
            <person name="Nakagawa K."/>
            <person name="Okumura K."/>
            <person name="Nagase T."/>
            <person name="Nomura N."/>
            <person name="Kikuchi H."/>
            <person name="Masuho Y."/>
            <person name="Yamashita R."/>
            <person name="Nakai K."/>
            <person name="Yada T."/>
            <person name="Nakamura Y."/>
            <person name="Ohara O."/>
            <person name="Isogai T."/>
            <person name="Sugano S."/>
        </authorList>
    </citation>
    <scope>NUCLEOTIDE SEQUENCE [LARGE SCALE MRNA]</scope>
</reference>
<reference key="5">
    <citation type="journal article" date="2004" name="Nature">
        <title>The DNA sequence and comparative analysis of human chromosome 10.</title>
        <authorList>
            <person name="Deloukas P."/>
            <person name="Earthrowl M.E."/>
            <person name="Grafham D.V."/>
            <person name="Rubenfield M."/>
            <person name="French L."/>
            <person name="Steward C.A."/>
            <person name="Sims S.K."/>
            <person name="Jones M.C."/>
            <person name="Searle S."/>
            <person name="Scott C."/>
            <person name="Howe K."/>
            <person name="Hunt S.E."/>
            <person name="Andrews T.D."/>
            <person name="Gilbert J.G.R."/>
            <person name="Swarbreck D."/>
            <person name="Ashurst J.L."/>
            <person name="Taylor A."/>
            <person name="Battles J."/>
            <person name="Bird C.P."/>
            <person name="Ainscough R."/>
            <person name="Almeida J.P."/>
            <person name="Ashwell R.I.S."/>
            <person name="Ambrose K.D."/>
            <person name="Babbage A.K."/>
            <person name="Bagguley C.L."/>
            <person name="Bailey J."/>
            <person name="Banerjee R."/>
            <person name="Bates K."/>
            <person name="Beasley H."/>
            <person name="Bray-Allen S."/>
            <person name="Brown A.J."/>
            <person name="Brown J.Y."/>
            <person name="Burford D.C."/>
            <person name="Burrill W."/>
            <person name="Burton J."/>
            <person name="Cahill P."/>
            <person name="Camire D."/>
            <person name="Carter N.P."/>
            <person name="Chapman J.C."/>
            <person name="Clark S.Y."/>
            <person name="Clarke G."/>
            <person name="Clee C.M."/>
            <person name="Clegg S."/>
            <person name="Corby N."/>
            <person name="Coulson A."/>
            <person name="Dhami P."/>
            <person name="Dutta I."/>
            <person name="Dunn M."/>
            <person name="Faulkner L."/>
            <person name="Frankish A."/>
            <person name="Frankland J.A."/>
            <person name="Garner P."/>
            <person name="Garnett J."/>
            <person name="Gribble S."/>
            <person name="Griffiths C."/>
            <person name="Grocock R."/>
            <person name="Gustafson E."/>
            <person name="Hammond S."/>
            <person name="Harley J.L."/>
            <person name="Hart E."/>
            <person name="Heath P.D."/>
            <person name="Ho T.P."/>
            <person name="Hopkins B."/>
            <person name="Horne J."/>
            <person name="Howden P.J."/>
            <person name="Huckle E."/>
            <person name="Hynds C."/>
            <person name="Johnson C."/>
            <person name="Johnson D."/>
            <person name="Kana A."/>
            <person name="Kay M."/>
            <person name="Kimberley A.M."/>
            <person name="Kershaw J.K."/>
            <person name="Kokkinaki M."/>
            <person name="Laird G.K."/>
            <person name="Lawlor S."/>
            <person name="Lee H.M."/>
            <person name="Leongamornlert D.A."/>
            <person name="Laird G."/>
            <person name="Lloyd C."/>
            <person name="Lloyd D.M."/>
            <person name="Loveland J."/>
            <person name="Lovell J."/>
            <person name="McLaren S."/>
            <person name="McLay K.E."/>
            <person name="McMurray A."/>
            <person name="Mashreghi-Mohammadi M."/>
            <person name="Matthews L."/>
            <person name="Milne S."/>
            <person name="Nickerson T."/>
            <person name="Nguyen M."/>
            <person name="Overton-Larty E."/>
            <person name="Palmer S.A."/>
            <person name="Pearce A.V."/>
            <person name="Peck A.I."/>
            <person name="Pelan S."/>
            <person name="Phillimore B."/>
            <person name="Porter K."/>
            <person name="Rice C.M."/>
            <person name="Rogosin A."/>
            <person name="Ross M.T."/>
            <person name="Sarafidou T."/>
            <person name="Sehra H.K."/>
            <person name="Shownkeen R."/>
            <person name="Skuce C.D."/>
            <person name="Smith M."/>
            <person name="Standring L."/>
            <person name="Sycamore N."/>
            <person name="Tester J."/>
            <person name="Thorpe A."/>
            <person name="Torcasso W."/>
            <person name="Tracey A."/>
            <person name="Tromans A."/>
            <person name="Tsolas J."/>
            <person name="Wall M."/>
            <person name="Walsh J."/>
            <person name="Wang H."/>
            <person name="Weinstock K."/>
            <person name="West A.P."/>
            <person name="Willey D.L."/>
            <person name="Whitehead S.L."/>
            <person name="Wilming L."/>
            <person name="Wray P.W."/>
            <person name="Young L."/>
            <person name="Chen Y."/>
            <person name="Lovering R.C."/>
            <person name="Moschonas N.K."/>
            <person name="Siebert R."/>
            <person name="Fechtel K."/>
            <person name="Bentley D."/>
            <person name="Durbin R.M."/>
            <person name="Hubbard T."/>
            <person name="Doucette-Stamm L."/>
            <person name="Beck S."/>
            <person name="Smith D.R."/>
            <person name="Rogers J."/>
        </authorList>
    </citation>
    <scope>NUCLEOTIDE SEQUENCE [LARGE SCALE GENOMIC DNA]</scope>
</reference>
<reference key="6">
    <citation type="submission" date="2005-09" db="EMBL/GenBank/DDBJ databases">
        <authorList>
            <person name="Mural R.J."/>
            <person name="Istrail S."/>
            <person name="Sutton G.G."/>
            <person name="Florea L."/>
            <person name="Halpern A.L."/>
            <person name="Mobarry C.M."/>
            <person name="Lippert R."/>
            <person name="Walenz B."/>
            <person name="Shatkay H."/>
            <person name="Dew I."/>
            <person name="Miller J.R."/>
            <person name="Flanigan M.J."/>
            <person name="Edwards N.J."/>
            <person name="Bolanos R."/>
            <person name="Fasulo D."/>
            <person name="Halldorsson B.V."/>
            <person name="Hannenhalli S."/>
            <person name="Turner R."/>
            <person name="Yooseph S."/>
            <person name="Lu F."/>
            <person name="Nusskern D.R."/>
            <person name="Shue B.C."/>
            <person name="Zheng X.H."/>
            <person name="Zhong F."/>
            <person name="Delcher A.L."/>
            <person name="Huson D.H."/>
            <person name="Kravitz S.A."/>
            <person name="Mouchard L."/>
            <person name="Reinert K."/>
            <person name="Remington K.A."/>
            <person name="Clark A.G."/>
            <person name="Waterman M.S."/>
            <person name="Eichler E.E."/>
            <person name="Adams M.D."/>
            <person name="Hunkapiller M.W."/>
            <person name="Myers E.W."/>
            <person name="Venter J.C."/>
        </authorList>
    </citation>
    <scope>NUCLEOTIDE SEQUENCE [LARGE SCALE GENOMIC DNA]</scope>
</reference>
<reference key="7">
    <citation type="journal article" date="2004" name="Genome Res.">
        <title>The status, quality, and expansion of the NIH full-length cDNA project: the Mammalian Gene Collection (MGC).</title>
        <authorList>
            <consortium name="The MGC Project Team"/>
        </authorList>
    </citation>
    <scope>NUCLEOTIDE SEQUENCE [LARGE SCALE MRNA]</scope>
    <source>
        <tissue>Lung</tissue>
    </source>
</reference>
<reference key="8">
    <citation type="journal article" date="2000" name="Biochemistry">
        <title>Hydrolysis of retinyl esters by pancreatic triglyceride lipase.</title>
        <authorList>
            <person name="van Bennekum A.M."/>
            <person name="Fisher E.A."/>
            <person name="Blaner W.S."/>
            <person name="Harrison E.H."/>
        </authorList>
    </citation>
    <scope>CATALYTIC ACTIVITY</scope>
    <scope>FUNCTION</scope>
    <scope>ACTIVITY REGULATION</scope>
</reference>
<reference key="9">
    <citation type="journal article" date="2007" name="J. Lipid Res.">
        <title>Further biochemical characterization of human pancreatic lipase-related protein 2 expressed in yeast cells.</title>
        <authorList>
            <person name="Eydoux C."/>
            <person name="De Caro J."/>
            <person name="Ferrato F."/>
            <person name="Boullanger P."/>
            <person name="Lafont D."/>
            <person name="Laugier R."/>
            <person name="Carriere F."/>
            <person name="De Caro A."/>
        </authorList>
    </citation>
    <scope>FUNCTION</scope>
    <scope>CATALYTIC ACTIVITY</scope>
    <scope>BIOPHYSICOCHEMICAL PROPERTIES</scope>
</reference>
<reference key="10">
    <citation type="journal article" date="2015" name="J. Biol. Chem.">
        <title>The beta5-Loop and Lid Domain Contribute to the Substrate Specificity of Pancreatic Lipase-related Protein 2 (PNLIPRP2).</title>
        <authorList>
            <person name="Xiao X."/>
            <person name="Lowe M.E."/>
        </authorList>
    </citation>
    <scope>FUNCTION</scope>
    <scope>CATALYTIC ACTIVITY</scope>
    <scope>ACTIVITY REGULATION</scope>
    <scope>REGION</scope>
</reference>
<reference key="11">
    <citation type="journal article" date="1990" name="Nature">
        <title>Structure of human pancreatic lipase.</title>
        <authorList>
            <person name="Winkler F.K."/>
            <person name="D'Arcy A."/>
            <person name="Hunziker W."/>
        </authorList>
    </citation>
    <scope>X-RAY CRYSTALLOGRAPHY (2.3 ANGSTROMS)</scope>
</reference>
<reference key="12">
    <citation type="journal article" date="1992" name="Nature">
        <title>Structure of the pancreatic lipase-procolipase complex.</title>
        <authorList>
            <person name="van Tilbeurgh H."/>
            <person name="Sarda L."/>
            <person name="Verger R."/>
            <person name="Cambillau C."/>
        </authorList>
    </citation>
    <scope>X-RAY CRYSTALLOGRAPHY (3.0 ANGSTROMS) IN COMPLEX WITH CLPS</scope>
</reference>
<reference key="13">
    <citation type="journal article" date="1993" name="Nature">
        <title>Interfacial activation of the lipase-procolipase complex by mixed micelles revealed by X-ray crystallography.</title>
        <authorList>
            <person name="van Tilbeurgh H."/>
            <person name="Egloff M.-P."/>
            <person name="Martinez C."/>
            <person name="Rugani N."/>
            <person name="Verger R."/>
            <person name="Cambillau C."/>
        </authorList>
    </citation>
    <scope>X-RAY CRYSTALLOGRAPHY (3.0 ANGSTROMS) IN COMPLEX WITH CLPS</scope>
    <scope>INTERACTION WITH CLPS</scope>
</reference>
<reference key="14">
    <citation type="journal article" date="1994" name="Protein Eng.">
        <title>Structure-function relationships in naturally occurring mutants of pancreatic lipase.</title>
        <authorList>
            <person name="Carriere F."/>
            <person name="Thirstrup K."/>
            <person name="Boel E."/>
            <person name="Verger R."/>
            <person name="Thim L."/>
        </authorList>
    </citation>
    <scope>STRUCTURE BY NMR OF 354-465</scope>
</reference>
<reference key="15">
    <citation type="journal article" date="2014" name="J. Lipid Res.">
        <title>Identification of a novel mutation in the PNLIP gene in two brothers with congenital pancreatic lipase deficiency.</title>
        <authorList>
            <person name="Behar D.M."/>
            <person name="Basel-Vanagaite L."/>
            <person name="Glaser F."/>
            <person name="Kaplan M."/>
            <person name="Tzur S."/>
            <person name="Magal N."/>
            <person name="Eidlitz-Markus T."/>
            <person name="Haimi-Cohen Y."/>
            <person name="Sarig G."/>
            <person name="Bormans C."/>
            <person name="Shohat M."/>
            <person name="Zeharia A."/>
        </authorList>
    </citation>
    <scope>INVOLVEMENT IN PNLIPD</scope>
    <scope>VARIANT PNLIPD MET-221</scope>
</reference>
<reference key="16">
    <citation type="journal article" date="2015" name="Biochim. Biophys. Acta">
        <title>A novel mutation in PNLIP causes pancreatic triglyceride lipase deficiency through protein misfolding.</title>
        <authorList>
            <person name="Szabo A."/>
            <person name="Xiao X."/>
            <person name="Haughney M."/>
            <person name="Spector A."/>
            <person name="Sahin-Toth M."/>
            <person name="Lowe M.E."/>
        </authorList>
    </citation>
    <scope>CHARACTERIZATION OF VARIANT PNLIPD MET-221</scope>
    <scope>SUBCELLULAR LOCATION</scope>
    <scope>FUNCTION</scope>
    <scope>CATALYTIC ACTIVITY</scope>
</reference>
<feature type="signal peptide">
    <location>
        <begin position="1"/>
        <end position="16"/>
    </location>
</feature>
<feature type="chain" id="PRO_0000017785" description="Pancreatic triacylglycerol lipase">
    <location>
        <begin position="17"/>
        <end position="465"/>
    </location>
</feature>
<feature type="domain" description="PLAT" evidence="1">
    <location>
        <begin position="355"/>
        <end position="465"/>
    </location>
</feature>
<feature type="active site" description="Nucleophile">
    <location>
        <position position="169"/>
    </location>
</feature>
<feature type="active site" description="Charge relay system">
    <location>
        <position position="193"/>
    </location>
</feature>
<feature type="active site" description="Charge relay system">
    <location>
        <position position="280"/>
    </location>
</feature>
<feature type="binding site">
    <location>
        <position position="204"/>
    </location>
    <ligand>
        <name>Ca(2+)</name>
        <dbReference type="ChEBI" id="CHEBI:29108"/>
    </ligand>
</feature>
<feature type="binding site">
    <location>
        <position position="207"/>
    </location>
    <ligand>
        <name>Ca(2+)</name>
        <dbReference type="ChEBI" id="CHEBI:29108"/>
    </ligand>
</feature>
<feature type="binding site">
    <location>
        <position position="209"/>
    </location>
    <ligand>
        <name>Ca(2+)</name>
        <dbReference type="ChEBI" id="CHEBI:29108"/>
    </ligand>
</feature>
<feature type="binding site">
    <location>
        <position position="212"/>
    </location>
    <ligand>
        <name>Ca(2+)</name>
        <dbReference type="ChEBI" id="CHEBI:29108"/>
    </ligand>
</feature>
<feature type="glycosylation site" description="N-linked (GlcNAc...) asparagine">
    <location>
        <position position="183"/>
    </location>
</feature>
<feature type="disulfide bond">
    <location>
        <begin position="20"/>
        <end position="26"/>
    </location>
</feature>
<feature type="disulfide bond">
    <location>
        <begin position="107"/>
        <end position="118"/>
    </location>
</feature>
<feature type="disulfide bond">
    <location>
        <begin position="254"/>
        <end position="278"/>
    </location>
</feature>
<feature type="disulfide bond">
    <location>
        <begin position="302"/>
        <end position="313"/>
    </location>
</feature>
<feature type="disulfide bond">
    <location>
        <begin position="316"/>
        <end position="321"/>
    </location>
</feature>
<feature type="disulfide bond">
    <location>
        <begin position="449"/>
        <end position="465"/>
    </location>
</feature>
<feature type="sequence variant" id="VAR_078977" description="In PNLIPD; loss of function in lipid catabolic process; the mutant is not secreted; dbSNP:rs746000327." evidence="4 5">
    <original>T</original>
    <variation>M</variation>
    <location>
        <position position="221"/>
    </location>
</feature>
<feature type="strand" evidence="12">
    <location>
        <begin position="18"/>
        <end position="21"/>
    </location>
</feature>
<feature type="turn" evidence="12">
    <location>
        <begin position="22"/>
        <end position="24"/>
    </location>
</feature>
<feature type="strand" evidence="12">
    <location>
        <begin position="25"/>
        <end position="28"/>
    </location>
</feature>
<feature type="turn" evidence="12">
    <location>
        <begin position="31"/>
        <end position="33"/>
    </location>
</feature>
<feature type="strand" evidence="12">
    <location>
        <begin position="34"/>
        <end position="38"/>
    </location>
</feature>
<feature type="helix" evidence="12">
    <location>
        <begin position="48"/>
        <end position="51"/>
    </location>
</feature>
<feature type="strand" evidence="12">
    <location>
        <begin position="54"/>
        <end position="58"/>
    </location>
</feature>
<feature type="strand" evidence="12">
    <location>
        <begin position="60"/>
        <end position="65"/>
    </location>
</feature>
<feature type="strand" evidence="12">
    <location>
        <begin position="67"/>
        <end position="69"/>
    </location>
</feature>
<feature type="helix" evidence="12">
    <location>
        <begin position="73"/>
        <end position="78"/>
    </location>
</feature>
<feature type="strand" evidence="12">
    <location>
        <begin position="87"/>
        <end position="91"/>
    </location>
</feature>
<feature type="helix" evidence="12">
    <location>
        <begin position="101"/>
        <end position="110"/>
    </location>
</feature>
<feature type="turn" evidence="12">
    <location>
        <begin position="111"/>
        <end position="113"/>
    </location>
</feature>
<feature type="strand" evidence="12">
    <location>
        <begin position="117"/>
        <end position="122"/>
    </location>
</feature>
<feature type="helix" evidence="12">
    <location>
        <begin position="124"/>
        <end position="127"/>
    </location>
</feature>
<feature type="helix" evidence="12">
    <location>
        <begin position="131"/>
        <end position="156"/>
    </location>
</feature>
<feature type="helix" evidence="12">
    <location>
        <begin position="160"/>
        <end position="162"/>
    </location>
</feature>
<feature type="strand" evidence="12">
    <location>
        <begin position="163"/>
        <end position="168"/>
    </location>
</feature>
<feature type="helix" evidence="12">
    <location>
        <begin position="170"/>
        <end position="180"/>
    </location>
</feature>
<feature type="turn" evidence="12">
    <location>
        <begin position="181"/>
        <end position="184"/>
    </location>
</feature>
<feature type="strand" evidence="12">
    <location>
        <begin position="186"/>
        <end position="193"/>
    </location>
</feature>
<feature type="turn" evidence="12">
    <location>
        <begin position="197"/>
        <end position="201"/>
    </location>
</feature>
<feature type="turn" evidence="12">
    <location>
        <begin position="204"/>
        <end position="206"/>
    </location>
</feature>
<feature type="helix" evidence="12">
    <location>
        <begin position="210"/>
        <end position="212"/>
    </location>
</feature>
<feature type="strand" evidence="12">
    <location>
        <begin position="216"/>
        <end position="219"/>
    </location>
</feature>
<feature type="turn" evidence="12">
    <location>
        <begin position="227"/>
        <end position="229"/>
    </location>
</feature>
<feature type="strand" evidence="12">
    <location>
        <begin position="239"/>
        <end position="245"/>
    </location>
</feature>
<feature type="strand" evidence="12">
    <location>
        <begin position="248"/>
        <end position="250"/>
    </location>
</feature>
<feature type="helix" evidence="12">
    <location>
        <begin position="258"/>
        <end position="262"/>
    </location>
</feature>
<feature type="helix" evidence="12">
    <location>
        <begin position="268"/>
        <end position="291"/>
    </location>
</feature>
<feature type="turn" evidence="12">
    <location>
        <begin position="294"/>
        <end position="297"/>
    </location>
</feature>
<feature type="helix" evidence="12">
    <location>
        <begin position="305"/>
        <end position="309"/>
    </location>
</feature>
<feature type="strand" evidence="12">
    <location>
        <begin position="323"/>
        <end position="325"/>
    </location>
</feature>
<feature type="helix" evidence="12">
    <location>
        <begin position="328"/>
        <end position="330"/>
    </location>
</feature>
<feature type="turn" evidence="12">
    <location>
        <begin position="332"/>
        <end position="335"/>
    </location>
</feature>
<feature type="strand" evidence="12">
    <location>
        <begin position="336"/>
        <end position="344"/>
    </location>
</feature>
<feature type="strand" evidence="12">
    <location>
        <begin position="348"/>
        <end position="351"/>
    </location>
</feature>
<feature type="strand" evidence="11">
    <location>
        <begin position="360"/>
        <end position="365"/>
    </location>
</feature>
<feature type="strand" evidence="11">
    <location>
        <begin position="368"/>
        <end position="380"/>
    </location>
</feature>
<feature type="strand" evidence="11">
    <location>
        <begin position="382"/>
        <end position="393"/>
    </location>
</feature>
<feature type="strand" evidence="11">
    <location>
        <begin position="398"/>
        <end position="407"/>
    </location>
</feature>
<feature type="strand" evidence="11">
    <location>
        <begin position="411"/>
        <end position="423"/>
    </location>
</feature>
<feature type="strand" evidence="11">
    <location>
        <begin position="430"/>
        <end position="439"/>
    </location>
</feature>
<feature type="strand" evidence="11">
    <location>
        <begin position="445"/>
        <end position="449"/>
    </location>
</feature>
<feature type="strand" evidence="11">
    <location>
        <begin position="460"/>
        <end position="464"/>
    </location>
</feature>
<proteinExistence type="evidence at protein level"/>
<protein>
    <recommendedName>
        <fullName evidence="7">Pancreatic triacylglycerol lipase</fullName>
        <shortName>PL</shortName>
        <shortName>PTL</shortName>
        <shortName>Pancreatic lipase</shortName>
        <ecNumber evidence="2">3.1.1.3</ecNumber>
    </recommendedName>
</protein>
<dbReference type="EC" id="3.1.1.3" evidence="2"/>
<dbReference type="EMBL" id="J05125">
    <property type="protein sequence ID" value="AAA36740.1"/>
    <property type="molecule type" value="mRNA"/>
</dbReference>
<dbReference type="EMBL" id="M93285">
    <property type="protein sequence ID" value="AAA60129.1"/>
    <property type="molecule type" value="mRNA"/>
</dbReference>
<dbReference type="EMBL" id="L24529">
    <property type="protein sequence ID" value="AAA99053.1"/>
    <property type="molecule type" value="Genomic_DNA"/>
</dbReference>
<dbReference type="EMBL" id="L11242">
    <property type="protein sequence ID" value="AAA99053.1"/>
    <property type="status" value="JOINED"/>
    <property type="molecule type" value="Genomic_DNA"/>
</dbReference>
<dbReference type="EMBL" id="L24502">
    <property type="protein sequence ID" value="AAA99053.1"/>
    <property type="status" value="JOINED"/>
    <property type="molecule type" value="Genomic_DNA"/>
</dbReference>
<dbReference type="EMBL" id="L24522">
    <property type="protein sequence ID" value="AAA99053.1"/>
    <property type="status" value="JOINED"/>
    <property type="molecule type" value="Genomic_DNA"/>
</dbReference>
<dbReference type="EMBL" id="L24523">
    <property type="protein sequence ID" value="AAA99053.1"/>
    <property type="status" value="JOINED"/>
    <property type="molecule type" value="Genomic_DNA"/>
</dbReference>
<dbReference type="EMBL" id="L24525">
    <property type="protein sequence ID" value="AAA99053.1"/>
    <property type="status" value="JOINED"/>
    <property type="molecule type" value="Genomic_DNA"/>
</dbReference>
<dbReference type="EMBL" id="L24526">
    <property type="protein sequence ID" value="AAA99053.1"/>
    <property type="status" value="JOINED"/>
    <property type="molecule type" value="Genomic_DNA"/>
</dbReference>
<dbReference type="EMBL" id="L24527">
    <property type="protein sequence ID" value="AAA99053.1"/>
    <property type="status" value="JOINED"/>
    <property type="molecule type" value="Genomic_DNA"/>
</dbReference>
<dbReference type="EMBL" id="L24528">
    <property type="protein sequence ID" value="AAA99053.1"/>
    <property type="status" value="JOINED"/>
    <property type="molecule type" value="Genomic_DNA"/>
</dbReference>
<dbReference type="EMBL" id="AK313941">
    <property type="protein sequence ID" value="BAG36659.1"/>
    <property type="molecule type" value="mRNA"/>
</dbReference>
<dbReference type="EMBL" id="AL731653">
    <property type="status" value="NOT_ANNOTATED_CDS"/>
    <property type="molecule type" value="Genomic_DNA"/>
</dbReference>
<dbReference type="EMBL" id="CH471066">
    <property type="protein sequence ID" value="EAW49451.1"/>
    <property type="molecule type" value="Genomic_DNA"/>
</dbReference>
<dbReference type="EMBL" id="BC014309">
    <property type="protein sequence ID" value="AAH14309.1"/>
    <property type="molecule type" value="mRNA"/>
</dbReference>
<dbReference type="CCDS" id="CCDS7594.1"/>
<dbReference type="PIR" id="C43357">
    <property type="entry name" value="C43357"/>
</dbReference>
<dbReference type="RefSeq" id="NP_000927.1">
    <property type="nucleotide sequence ID" value="NM_000936.4"/>
</dbReference>
<dbReference type="PDB" id="1GPL">
    <property type="method" value="X-ray"/>
    <property type="resolution" value="2.01 A"/>
    <property type="chains" value="A=360-465"/>
</dbReference>
<dbReference type="PDB" id="1LPA">
    <property type="method" value="X-ray"/>
    <property type="resolution" value="3.04 A"/>
    <property type="chains" value="B=17-465"/>
</dbReference>
<dbReference type="PDB" id="1LPB">
    <property type="method" value="X-ray"/>
    <property type="resolution" value="2.46 A"/>
    <property type="chains" value="B=17-465"/>
</dbReference>
<dbReference type="PDB" id="1N8S">
    <property type="method" value="X-ray"/>
    <property type="resolution" value="3.04 A"/>
    <property type="chains" value="A=17-465"/>
</dbReference>
<dbReference type="PDBsum" id="1GPL"/>
<dbReference type="PDBsum" id="1LPA"/>
<dbReference type="PDBsum" id="1LPB"/>
<dbReference type="PDBsum" id="1N8S"/>
<dbReference type="SMR" id="P16233"/>
<dbReference type="BioGRID" id="111407">
    <property type="interactions" value="10"/>
</dbReference>
<dbReference type="CORUM" id="P16233"/>
<dbReference type="FunCoup" id="P16233">
    <property type="interactions" value="150"/>
</dbReference>
<dbReference type="IntAct" id="P16233">
    <property type="interactions" value="10"/>
</dbReference>
<dbReference type="MINT" id="P16233"/>
<dbReference type="STRING" id="9606.ENSP00000358223"/>
<dbReference type="BindingDB" id="P16233"/>
<dbReference type="ChEMBL" id="CHEMBL1812"/>
<dbReference type="DrugBank" id="DB04233">
    <property type="generic name" value="(Hydroxyethyloxy)Tri(Ethyloxy)Octane"/>
</dbReference>
<dbReference type="DrugBank" id="DB02451">
    <property type="generic name" value="B-nonylglucoside"/>
</dbReference>
<dbReference type="DrugBank" id="DB06586">
    <property type="generic name" value="Cetilistat"/>
</dbReference>
<dbReference type="DrugBank" id="DB09093">
    <property type="generic name" value="Chlortetracycline"/>
</dbReference>
<dbReference type="DrugBank" id="DB06219">
    <property type="generic name" value="Dalbavancin"/>
</dbReference>
<dbReference type="DrugBank" id="DB08909">
    <property type="generic name" value="Glycerol phenylbutyrate"/>
</dbReference>
<dbReference type="DrugBank" id="DB08222">
    <property type="generic name" value="METHOXYUNDECYLPHOSPHINIC ACID"/>
</dbReference>
<dbReference type="DrugBank" id="DB00788">
    <property type="generic name" value="Naproxen"/>
</dbReference>
<dbReference type="DrugBank" id="DB01083">
    <property type="generic name" value="Orlistat"/>
</dbReference>
<dbReference type="DrugCentral" id="P16233"/>
<dbReference type="GuidetoPHARMACOLOGY" id="2590"/>
<dbReference type="SwissLipids" id="SLP:000000529"/>
<dbReference type="ESTHER" id="human-PNLIP">
    <property type="family name" value="Pancreatic_lipase"/>
</dbReference>
<dbReference type="GlyCosmos" id="P16233">
    <property type="glycosylation" value="1 site, No reported glycans"/>
</dbReference>
<dbReference type="GlyGen" id="P16233">
    <property type="glycosylation" value="1 site"/>
</dbReference>
<dbReference type="iPTMnet" id="P16233"/>
<dbReference type="PhosphoSitePlus" id="P16233"/>
<dbReference type="BioMuta" id="PNLIP"/>
<dbReference type="DMDM" id="126318"/>
<dbReference type="jPOST" id="P16233"/>
<dbReference type="MassIVE" id="P16233"/>
<dbReference type="PaxDb" id="9606-ENSP00000358223"/>
<dbReference type="PeptideAtlas" id="P16233"/>
<dbReference type="ProteomicsDB" id="53327"/>
<dbReference type="Antibodypedia" id="18720">
    <property type="antibodies" value="551 antibodies from 36 providers"/>
</dbReference>
<dbReference type="DNASU" id="5406"/>
<dbReference type="Ensembl" id="ENST00000369221.2">
    <property type="protein sequence ID" value="ENSP00000358223.2"/>
    <property type="gene ID" value="ENSG00000175535.6"/>
</dbReference>
<dbReference type="GeneID" id="5406"/>
<dbReference type="KEGG" id="hsa:5406"/>
<dbReference type="MANE-Select" id="ENST00000369221.2">
    <property type="protein sequence ID" value="ENSP00000358223.2"/>
    <property type="RefSeq nucleotide sequence ID" value="NM_000936.4"/>
    <property type="RefSeq protein sequence ID" value="NP_000927.1"/>
</dbReference>
<dbReference type="UCSC" id="uc001lcm.4">
    <property type="organism name" value="human"/>
</dbReference>
<dbReference type="AGR" id="HGNC:9155"/>
<dbReference type="CTD" id="5406"/>
<dbReference type="DisGeNET" id="5406"/>
<dbReference type="GeneCards" id="PNLIP"/>
<dbReference type="HGNC" id="HGNC:9155">
    <property type="gene designation" value="PNLIP"/>
</dbReference>
<dbReference type="HPA" id="ENSG00000175535">
    <property type="expression patterns" value="Tissue enriched (pancreas)"/>
</dbReference>
<dbReference type="MalaCards" id="PNLIP"/>
<dbReference type="MIM" id="246600">
    <property type="type" value="gene"/>
</dbReference>
<dbReference type="MIM" id="614338">
    <property type="type" value="phenotype"/>
</dbReference>
<dbReference type="neXtProt" id="NX_P16233"/>
<dbReference type="OpenTargets" id="ENSG00000175535"/>
<dbReference type="PharmGKB" id="PA33478"/>
<dbReference type="VEuPathDB" id="HostDB:ENSG00000175535"/>
<dbReference type="eggNOG" id="ENOG502QUK7">
    <property type="taxonomic scope" value="Eukaryota"/>
</dbReference>
<dbReference type="GeneTree" id="ENSGT00940000160632"/>
<dbReference type="HOGENOM" id="CLU_027171_0_2_1"/>
<dbReference type="InParanoid" id="P16233"/>
<dbReference type="OMA" id="EPWVQGH"/>
<dbReference type="OrthoDB" id="199913at2759"/>
<dbReference type="PAN-GO" id="P16233">
    <property type="GO annotations" value="3 GO annotations based on evolutionary models"/>
</dbReference>
<dbReference type="PhylomeDB" id="P16233"/>
<dbReference type="TreeFam" id="TF324997"/>
<dbReference type="BioCyc" id="MetaCyc:HS10947-MONOMER"/>
<dbReference type="BRENDA" id="3.1.1.3">
    <property type="organism ID" value="2681"/>
</dbReference>
<dbReference type="PathwayCommons" id="P16233"/>
<dbReference type="Reactome" id="R-HSA-192456">
    <property type="pathway name" value="Digestion of dietary lipid"/>
</dbReference>
<dbReference type="Reactome" id="R-HSA-975634">
    <property type="pathway name" value="Retinoid metabolism and transport"/>
</dbReference>
<dbReference type="Reactome" id="R-HSA-9925561">
    <property type="pathway name" value="Developmental Lineage of Pancreatic Acinar Cells"/>
</dbReference>
<dbReference type="SABIO-RK" id="P16233"/>
<dbReference type="SignaLink" id="P16233"/>
<dbReference type="BioGRID-ORCS" id="5406">
    <property type="hits" value="8 hits in 1149 CRISPR screens"/>
</dbReference>
<dbReference type="ChiTaRS" id="PNLIP">
    <property type="organism name" value="human"/>
</dbReference>
<dbReference type="EvolutionaryTrace" id="P16233"/>
<dbReference type="GeneWiki" id="Pancreatic_lipase"/>
<dbReference type="GenomeRNAi" id="5406"/>
<dbReference type="Pharos" id="P16233">
    <property type="development level" value="Tclin"/>
</dbReference>
<dbReference type="PRO" id="PR:P16233"/>
<dbReference type="Proteomes" id="UP000005640">
    <property type="component" value="Chromosome 10"/>
</dbReference>
<dbReference type="RNAct" id="P16233">
    <property type="molecule type" value="protein"/>
</dbReference>
<dbReference type="Bgee" id="ENSG00000175535">
    <property type="expression patterns" value="Expressed in body of pancreas and 89 other cell types or tissues"/>
</dbReference>
<dbReference type="GO" id="GO:0005576">
    <property type="term" value="C:extracellular region"/>
    <property type="evidence" value="ECO:0000304"/>
    <property type="project" value="Reactome"/>
</dbReference>
<dbReference type="GO" id="GO:0005615">
    <property type="term" value="C:extracellular space"/>
    <property type="evidence" value="ECO:0000314"/>
    <property type="project" value="UniProtKB"/>
</dbReference>
<dbReference type="GO" id="GO:0047376">
    <property type="term" value="F:all-trans-retinyl-palmitate hydrolase, all-trans-retinol forming activity"/>
    <property type="evidence" value="ECO:0007669"/>
    <property type="project" value="RHEA"/>
</dbReference>
<dbReference type="GO" id="GO:0016298">
    <property type="term" value="F:lipase activity"/>
    <property type="evidence" value="ECO:0000314"/>
    <property type="project" value="UniProtKB"/>
</dbReference>
<dbReference type="GO" id="GO:0004465">
    <property type="term" value="F:lipoprotein lipase activity"/>
    <property type="evidence" value="ECO:0000318"/>
    <property type="project" value="GO_Central"/>
</dbReference>
<dbReference type="GO" id="GO:0046872">
    <property type="term" value="F:metal ion binding"/>
    <property type="evidence" value="ECO:0007669"/>
    <property type="project" value="UniProtKB-KW"/>
</dbReference>
<dbReference type="GO" id="GO:0008970">
    <property type="term" value="F:phospholipase A1 activity"/>
    <property type="evidence" value="ECO:0000318"/>
    <property type="project" value="GO_Central"/>
</dbReference>
<dbReference type="GO" id="GO:0004806">
    <property type="term" value="F:triacylglycerol lipase activity"/>
    <property type="evidence" value="ECO:0000250"/>
    <property type="project" value="UniProtKB"/>
</dbReference>
<dbReference type="GO" id="GO:0042632">
    <property type="term" value="P:cholesterol homeostasis"/>
    <property type="evidence" value="ECO:0000318"/>
    <property type="project" value="GO_Central"/>
</dbReference>
<dbReference type="GO" id="GO:0006633">
    <property type="term" value="P:fatty acid biosynthetic process"/>
    <property type="evidence" value="ECO:0000318"/>
    <property type="project" value="GO_Central"/>
</dbReference>
<dbReference type="GO" id="GO:0034375">
    <property type="term" value="P:high-density lipoprotein particle remodeling"/>
    <property type="evidence" value="ECO:0000318"/>
    <property type="project" value="GO_Central"/>
</dbReference>
<dbReference type="GO" id="GO:0030299">
    <property type="term" value="P:intestinal cholesterol absorption"/>
    <property type="evidence" value="ECO:0007669"/>
    <property type="project" value="Ensembl"/>
</dbReference>
<dbReference type="GO" id="GO:0006629">
    <property type="term" value="P:lipid metabolic process"/>
    <property type="evidence" value="ECO:0000315"/>
    <property type="project" value="UniProtKB"/>
</dbReference>
<dbReference type="GO" id="GO:0061365">
    <property type="term" value="P:positive regulation of triglyceride lipase activity"/>
    <property type="evidence" value="ECO:0000314"/>
    <property type="project" value="CACAO"/>
</dbReference>
<dbReference type="GO" id="GO:0019433">
    <property type="term" value="P:triglyceride catabolic process"/>
    <property type="evidence" value="ECO:0000318"/>
    <property type="project" value="GO_Central"/>
</dbReference>
<dbReference type="CDD" id="cd00707">
    <property type="entry name" value="Pancreat_lipase_like"/>
    <property type="match status" value="1"/>
</dbReference>
<dbReference type="CDD" id="cd01759">
    <property type="entry name" value="PLAT_PL"/>
    <property type="match status" value="1"/>
</dbReference>
<dbReference type="FunFam" id="3.40.50.1820:FF:000033">
    <property type="entry name" value="Pancreatic triacylglycerol lipase"/>
    <property type="match status" value="1"/>
</dbReference>
<dbReference type="FunFam" id="2.60.60.20:FF:000003">
    <property type="entry name" value="Triacylglycerol lipase"/>
    <property type="match status" value="1"/>
</dbReference>
<dbReference type="Gene3D" id="3.40.50.1820">
    <property type="entry name" value="alpha/beta hydrolase"/>
    <property type="match status" value="1"/>
</dbReference>
<dbReference type="Gene3D" id="2.60.60.20">
    <property type="entry name" value="PLAT/LH2 domain"/>
    <property type="match status" value="1"/>
</dbReference>
<dbReference type="InterPro" id="IPR029058">
    <property type="entry name" value="AB_hydrolase_fold"/>
</dbReference>
<dbReference type="InterPro" id="IPR013818">
    <property type="entry name" value="Lipase"/>
</dbReference>
<dbReference type="InterPro" id="IPR016272">
    <property type="entry name" value="Lipase_LIPH"/>
</dbReference>
<dbReference type="InterPro" id="IPR033906">
    <property type="entry name" value="Lipase_N"/>
</dbReference>
<dbReference type="InterPro" id="IPR002331">
    <property type="entry name" value="Lipase_panc"/>
</dbReference>
<dbReference type="InterPro" id="IPR001024">
    <property type="entry name" value="PLAT/LH2_dom"/>
</dbReference>
<dbReference type="InterPro" id="IPR036392">
    <property type="entry name" value="PLAT/LH2_dom_sf"/>
</dbReference>
<dbReference type="InterPro" id="IPR000734">
    <property type="entry name" value="TAG_lipase"/>
</dbReference>
<dbReference type="PANTHER" id="PTHR11610">
    <property type="entry name" value="LIPASE"/>
    <property type="match status" value="1"/>
</dbReference>
<dbReference type="PANTHER" id="PTHR11610:SF147">
    <property type="entry name" value="PANCREATIC TRIACYLGLYCEROL LIPASE"/>
    <property type="match status" value="1"/>
</dbReference>
<dbReference type="Pfam" id="PF00151">
    <property type="entry name" value="Lipase"/>
    <property type="match status" value="1"/>
</dbReference>
<dbReference type="Pfam" id="PF01477">
    <property type="entry name" value="PLAT"/>
    <property type="match status" value="1"/>
</dbReference>
<dbReference type="PIRSF" id="PIRSF000865">
    <property type="entry name" value="Lipoprotein_lipase_LIPH"/>
    <property type="match status" value="1"/>
</dbReference>
<dbReference type="PRINTS" id="PR00823">
    <property type="entry name" value="PANCLIPASE"/>
</dbReference>
<dbReference type="PRINTS" id="PR00821">
    <property type="entry name" value="TAGLIPASE"/>
</dbReference>
<dbReference type="SMART" id="SM00308">
    <property type="entry name" value="LH2"/>
    <property type="match status" value="1"/>
</dbReference>
<dbReference type="SUPFAM" id="SSF53474">
    <property type="entry name" value="alpha/beta-Hydrolases"/>
    <property type="match status" value="1"/>
</dbReference>
<dbReference type="SUPFAM" id="SSF49723">
    <property type="entry name" value="Lipase/lipooxygenase domain (PLAT/LH2 domain)"/>
    <property type="match status" value="1"/>
</dbReference>
<dbReference type="PROSITE" id="PS00120">
    <property type="entry name" value="LIPASE_SER"/>
    <property type="match status" value="1"/>
</dbReference>
<dbReference type="PROSITE" id="PS50095">
    <property type="entry name" value="PLAT"/>
    <property type="match status" value="1"/>
</dbReference>
<gene>
    <name evidence="10" type="primary">PNLIP</name>
</gene>
<keyword id="KW-0002">3D-structure</keyword>
<keyword id="KW-0106">Calcium</keyword>
<keyword id="KW-0225">Disease variant</keyword>
<keyword id="KW-1015">Disulfide bond</keyword>
<keyword id="KW-0325">Glycoprotein</keyword>
<keyword id="KW-0378">Hydrolase</keyword>
<keyword id="KW-0442">Lipid degradation</keyword>
<keyword id="KW-0443">Lipid metabolism</keyword>
<keyword id="KW-0479">Metal-binding</keyword>
<keyword id="KW-1267">Proteomics identification</keyword>
<keyword id="KW-1185">Reference proteome</keyword>
<keyword id="KW-0964">Secreted</keyword>
<keyword id="KW-0732">Signal</keyword>
<evidence type="ECO:0000255" key="1">
    <source>
        <dbReference type="PROSITE-ProRule" id="PRU00152"/>
    </source>
</evidence>
<evidence type="ECO:0000269" key="2">
    <source>
    </source>
</evidence>
<evidence type="ECO:0000269" key="3">
    <source>
    </source>
</evidence>
<evidence type="ECO:0000269" key="4">
    <source>
    </source>
</evidence>
<evidence type="ECO:0000269" key="5">
    <source>
    </source>
</evidence>
<evidence type="ECO:0000269" key="6">
    <source>
    </source>
</evidence>
<evidence type="ECO:0000305" key="7"/>
<evidence type="ECO:0000305" key="8">
    <source>
    </source>
</evidence>
<evidence type="ECO:0000305" key="9">
    <source>
    </source>
</evidence>
<evidence type="ECO:0000312" key="10">
    <source>
        <dbReference type="HGNC" id="HGNC:9155"/>
    </source>
</evidence>
<evidence type="ECO:0007829" key="11">
    <source>
        <dbReference type="PDB" id="1GPL"/>
    </source>
</evidence>
<evidence type="ECO:0007829" key="12">
    <source>
        <dbReference type="PDB" id="1LPB"/>
    </source>
</evidence>
<name>LIPP_HUMAN</name>
<sequence length="465" mass="51157">MLPLWTLSLLLGAVAGKEVCYERLGCFSDDSPWSGITERPLHILPWSPKDVNTRFLLYTNENPNNFQEVAADSSSISGSNFKTNRKTRFIIHGFIDKGEENWLANVCKNLFKVESVNCICVDWKGGSRTGYTQASQNIRIVGAEVAYFVEFLQSAFGYSPSNVHVIGHSLGAHAAGEAGRRTNGTIGRITGLDPAEPCFQGTPELVRLDPSDAKFVDVIHTDGAPIVPNLGFGMSQVVGHLDFFPNGGVEMPGCKKNILSQIVDIDGIWEGTRDFAACNHLRSYKYYTDSIVNPDGFAGFPCASYNVFTANKCFPCPSGGCPQMGHYADRYPGKTNDVGQKFYLDTGDASNFARWRYKVSVTLSGKKVTGHILVSLFGNKGNSKQYEIFKGTLKPDSTHSNEFDSDVDVGDLQMVKFIWYNNVINPTLPRVGASKIIVETNVGKQFNFCSPETVREEVLLTLTPC</sequence>
<organism>
    <name type="scientific">Homo sapiens</name>
    <name type="common">Human</name>
    <dbReference type="NCBI Taxonomy" id="9606"/>
    <lineage>
        <taxon>Eukaryota</taxon>
        <taxon>Metazoa</taxon>
        <taxon>Chordata</taxon>
        <taxon>Craniata</taxon>
        <taxon>Vertebrata</taxon>
        <taxon>Euteleostomi</taxon>
        <taxon>Mammalia</taxon>
        <taxon>Eutheria</taxon>
        <taxon>Euarchontoglires</taxon>
        <taxon>Primates</taxon>
        <taxon>Haplorrhini</taxon>
        <taxon>Catarrhini</taxon>
        <taxon>Hominidae</taxon>
        <taxon>Homo</taxon>
    </lineage>
</organism>
<accession>P16233</accession>
<accession>Q5VSQ2</accession>
<comment type="function">
    <text evidence="2 3">Plays an important role in fat metabolism. It preferentially splits the esters of long-chain fatty acids at positions 1 and 3, producing mainly 2-monoacylglycerol and free fatty acids, and shows considerably higher activity against insoluble emulsified substrates than against soluble ones.</text>
</comment>
<comment type="catalytic activity">
    <reaction evidence="2">
        <text>a triacylglycerol + H2O = a diacylglycerol + a fatty acid + H(+)</text>
        <dbReference type="Rhea" id="RHEA:12044"/>
        <dbReference type="ChEBI" id="CHEBI:15377"/>
        <dbReference type="ChEBI" id="CHEBI:15378"/>
        <dbReference type="ChEBI" id="CHEBI:17855"/>
        <dbReference type="ChEBI" id="CHEBI:18035"/>
        <dbReference type="ChEBI" id="CHEBI:28868"/>
        <dbReference type="EC" id="3.1.1.3"/>
    </reaction>
    <physiologicalReaction direction="left-to-right" evidence="8">
        <dbReference type="Rhea" id="RHEA:12045"/>
    </physiologicalReaction>
</comment>
<comment type="catalytic activity">
    <reaction evidence="5">
        <text>1,2,3-tributanoylglycerol + H2O = dibutanoylglycerol + butanoate + H(+)</text>
        <dbReference type="Rhea" id="RHEA:40475"/>
        <dbReference type="ChEBI" id="CHEBI:15377"/>
        <dbReference type="ChEBI" id="CHEBI:15378"/>
        <dbReference type="ChEBI" id="CHEBI:17968"/>
        <dbReference type="ChEBI" id="CHEBI:35020"/>
        <dbReference type="ChEBI" id="CHEBI:76478"/>
    </reaction>
    <physiologicalReaction direction="left-to-right" evidence="5">
        <dbReference type="Rhea" id="RHEA:40476"/>
    </physiologicalReaction>
</comment>
<comment type="catalytic activity">
    <reaction evidence="2 3">
        <text>1,2,3-tri-(9Z-octadecenoyl)-glycerol + H2O = di-(9Z)-octadecenoylglycerol + (9Z)-octadecenoate + H(+)</text>
        <dbReference type="Rhea" id="RHEA:38575"/>
        <dbReference type="ChEBI" id="CHEBI:15377"/>
        <dbReference type="ChEBI" id="CHEBI:15378"/>
        <dbReference type="ChEBI" id="CHEBI:30823"/>
        <dbReference type="ChEBI" id="CHEBI:53753"/>
        <dbReference type="ChEBI" id="CHEBI:75945"/>
    </reaction>
    <physiologicalReaction direction="left-to-right" evidence="8 9">
        <dbReference type="Rhea" id="RHEA:38576"/>
    </physiologicalReaction>
</comment>
<comment type="catalytic activity">
    <reaction evidence="2">
        <text>all-trans-retinyl hexadecanoate + H2O = all-trans-retinol + hexadecanoate + H(+)</text>
        <dbReference type="Rhea" id="RHEA:13933"/>
        <dbReference type="ChEBI" id="CHEBI:7896"/>
        <dbReference type="ChEBI" id="CHEBI:15377"/>
        <dbReference type="ChEBI" id="CHEBI:15378"/>
        <dbReference type="ChEBI" id="CHEBI:17336"/>
        <dbReference type="ChEBI" id="CHEBI:17616"/>
    </reaction>
    <physiologicalReaction direction="left-to-right" evidence="8">
        <dbReference type="Rhea" id="RHEA:13934"/>
    </physiologicalReaction>
</comment>
<comment type="catalytic activity">
    <reaction evidence="3">
        <text>1,2-di-(9Z-octadecenoyl)-glycerol + H2O = (9Z-octadecenoyl)-glycerol + (9Z)-octadecenoate + H(+)</text>
        <dbReference type="Rhea" id="RHEA:38455"/>
        <dbReference type="ChEBI" id="CHEBI:15377"/>
        <dbReference type="ChEBI" id="CHEBI:15378"/>
        <dbReference type="ChEBI" id="CHEBI:30823"/>
        <dbReference type="ChEBI" id="CHEBI:52323"/>
        <dbReference type="ChEBI" id="CHEBI:75937"/>
    </reaction>
    <physiologicalReaction direction="left-to-right" evidence="9">
        <dbReference type="Rhea" id="RHEA:38456"/>
    </physiologicalReaction>
</comment>
<comment type="activity regulation">
    <text evidence="2">Inhibited by bile salts, is reactivated by (pro)colipase/CLPS.</text>
</comment>
<comment type="biophysicochemical properties">
    <phDependence>
        <text evidence="3">Optimum pH is 7.</text>
    </phDependence>
</comment>
<comment type="subunit">
    <text evidence="6">Forms a 1:1 stoichiometric complex with (pro)colipase/CLPS.</text>
</comment>
<comment type="subcellular location">
    <subcellularLocation>
        <location evidence="5">Secreted</location>
    </subcellularLocation>
</comment>
<comment type="disease" evidence="4 5">
    <disease id="DI-05008">
        <name>Pancreatic lipase deficiency</name>
        <acronym>PNLIPD</acronym>
        <description>An autosomal recessive disorder characterized by exocrine pancreatic failure. Clinical findings include oily/greasy stools from infancy or early childhood, absence of discernible pancreatic disease, and significantly decreased pancreatic lipolytic activity.</description>
        <dbReference type="MIM" id="614338"/>
    </disease>
    <text>The disease is caused by variants affecting the gene represented in this entry.</text>
</comment>
<comment type="similarity">
    <text evidence="7">Belongs to the AB hydrolase superfamily. Lipase family.</text>
</comment>
<comment type="online information" name="Wikipedia">
    <link uri="https://en.wikipedia.org/wiki/Pancreatic_lipase"/>
    <text>Pancreatic lipase entry</text>
</comment>